<proteinExistence type="inferred from homology"/>
<comment type="function">
    <text evidence="1">Catalyzes the NADPH-dependent reduction of L-glutamate 5-phosphate into L-glutamate 5-semialdehyde and phosphate. The product spontaneously undergoes cyclization to form 1-pyrroline-5-carboxylate.</text>
</comment>
<comment type="catalytic activity">
    <reaction evidence="1">
        <text>L-glutamate 5-semialdehyde + phosphate + NADP(+) = L-glutamyl 5-phosphate + NADPH + H(+)</text>
        <dbReference type="Rhea" id="RHEA:19541"/>
        <dbReference type="ChEBI" id="CHEBI:15378"/>
        <dbReference type="ChEBI" id="CHEBI:43474"/>
        <dbReference type="ChEBI" id="CHEBI:57783"/>
        <dbReference type="ChEBI" id="CHEBI:58066"/>
        <dbReference type="ChEBI" id="CHEBI:58274"/>
        <dbReference type="ChEBI" id="CHEBI:58349"/>
        <dbReference type="EC" id="1.2.1.41"/>
    </reaction>
</comment>
<comment type="pathway">
    <text evidence="1">Amino-acid biosynthesis; L-proline biosynthesis; L-glutamate 5-semialdehyde from L-glutamate: step 2/2.</text>
</comment>
<comment type="subcellular location">
    <subcellularLocation>
        <location evidence="1">Cytoplasm</location>
    </subcellularLocation>
</comment>
<comment type="similarity">
    <text evidence="1">Belongs to the gamma-glutamyl phosphate reductase family.</text>
</comment>
<comment type="sequence caution" evidence="2">
    <conflict type="frameshift">
        <sequence resource="EMBL-CDS" id="BAA05045"/>
    </conflict>
</comment>
<organism>
    <name type="scientific">Bacillus subtilis (strain 168)</name>
    <dbReference type="NCBI Taxonomy" id="224308"/>
    <lineage>
        <taxon>Bacteria</taxon>
        <taxon>Bacillati</taxon>
        <taxon>Bacillota</taxon>
        <taxon>Bacilli</taxon>
        <taxon>Bacillales</taxon>
        <taxon>Bacillaceae</taxon>
        <taxon>Bacillus</taxon>
    </lineage>
</organism>
<gene>
    <name evidence="1" type="primary">proA</name>
    <name type="ordered locus">BSU13130</name>
</gene>
<sequence>MSEVSVKAKLAKEAAAEMIMKTTAEKDEALSLIANGLRKELDFLLAENAKDIVNGKENGLTPDIIDRLSLDEKRIRDIADAVELLIDLADPIGDSLETIEKENGLFIEKIRVPLGVVGMIYEARPNVTVDAATLCLKTGNAVVLRGSSSAIHSNKALVSVIYRALEQSALPIHAVQLIEDTSRETAKELFTLNDGLDVLIPRGGKKLIDLVVRESTVPVLETGAGNCHIFIDETAKPQMAEKVVVNAKTQRPSVCNAIESLLIHKAWARQHGKELLDQLENAGVEIRGDELVCELHPSSKQASKEDWETEFLAPVLSVKTVENVQEAVKHIQQYGTNHSEAILTENDKNAVYFQTAVDAAAVYHNASTRFTDGFEFGYGAEIGISTQKLHARGPMGLPALTSTKYIIKGTGQIRE</sequence>
<keyword id="KW-0028">Amino-acid biosynthesis</keyword>
<keyword id="KW-0963">Cytoplasm</keyword>
<keyword id="KW-0521">NADP</keyword>
<keyword id="KW-0560">Oxidoreductase</keyword>
<keyword id="KW-0641">Proline biosynthesis</keyword>
<keyword id="KW-1185">Reference proteome</keyword>
<name>PROA_BACSU</name>
<dbReference type="EC" id="1.2.1.41" evidence="1"/>
<dbReference type="EMBL" id="D26044">
    <property type="protein sequence ID" value="BAA05045.1"/>
    <property type="status" value="ALT_FRAME"/>
    <property type="molecule type" value="Genomic_DNA"/>
</dbReference>
<dbReference type="EMBL" id="AJ002571">
    <property type="protein sequence ID" value="CAA05592.1"/>
    <property type="molecule type" value="Genomic_DNA"/>
</dbReference>
<dbReference type="EMBL" id="AL009126">
    <property type="protein sequence ID" value="CAB13170.2"/>
    <property type="molecule type" value="Genomic_DNA"/>
</dbReference>
<dbReference type="PIR" id="C69682">
    <property type="entry name" value="C69682"/>
</dbReference>
<dbReference type="RefSeq" id="NP_389196.2">
    <property type="nucleotide sequence ID" value="NC_000964.3"/>
</dbReference>
<dbReference type="RefSeq" id="WP_003245312.1">
    <property type="nucleotide sequence ID" value="NZ_OZ025638.1"/>
</dbReference>
<dbReference type="SMR" id="P39821"/>
<dbReference type="FunCoup" id="P39821">
    <property type="interactions" value="534"/>
</dbReference>
<dbReference type="STRING" id="224308.BSU13130"/>
<dbReference type="jPOST" id="P39821"/>
<dbReference type="PaxDb" id="224308-BSU13130"/>
<dbReference type="EnsemblBacteria" id="CAB13170">
    <property type="protein sequence ID" value="CAB13170"/>
    <property type="gene ID" value="BSU_13130"/>
</dbReference>
<dbReference type="GeneID" id="936166"/>
<dbReference type="KEGG" id="bsu:BSU13130"/>
<dbReference type="PATRIC" id="fig|224308.179.peg.1425"/>
<dbReference type="eggNOG" id="COG0014">
    <property type="taxonomic scope" value="Bacteria"/>
</dbReference>
<dbReference type="InParanoid" id="P39821"/>
<dbReference type="OrthoDB" id="9809970at2"/>
<dbReference type="PhylomeDB" id="P39821"/>
<dbReference type="BioCyc" id="BSUB:BSU13130-MONOMER"/>
<dbReference type="UniPathway" id="UPA00098">
    <property type="reaction ID" value="UER00360"/>
</dbReference>
<dbReference type="Proteomes" id="UP000001570">
    <property type="component" value="Chromosome"/>
</dbReference>
<dbReference type="GO" id="GO:0005737">
    <property type="term" value="C:cytoplasm"/>
    <property type="evidence" value="ECO:0007669"/>
    <property type="project" value="UniProtKB-SubCell"/>
</dbReference>
<dbReference type="GO" id="GO:0004350">
    <property type="term" value="F:glutamate-5-semialdehyde dehydrogenase activity"/>
    <property type="evidence" value="ECO:0000318"/>
    <property type="project" value="GO_Central"/>
</dbReference>
<dbReference type="GO" id="GO:0050661">
    <property type="term" value="F:NADP binding"/>
    <property type="evidence" value="ECO:0007669"/>
    <property type="project" value="InterPro"/>
</dbReference>
<dbReference type="GO" id="GO:0055129">
    <property type="term" value="P:L-proline biosynthetic process"/>
    <property type="evidence" value="ECO:0007669"/>
    <property type="project" value="UniProtKB-UniRule"/>
</dbReference>
<dbReference type="CDD" id="cd07079">
    <property type="entry name" value="ALDH_F18-19_ProA-GPR"/>
    <property type="match status" value="1"/>
</dbReference>
<dbReference type="FunFam" id="3.40.309.10:FF:000006">
    <property type="entry name" value="Gamma-glutamyl phosphate reductase"/>
    <property type="match status" value="1"/>
</dbReference>
<dbReference type="Gene3D" id="3.40.605.10">
    <property type="entry name" value="Aldehyde Dehydrogenase, Chain A, domain 1"/>
    <property type="match status" value="1"/>
</dbReference>
<dbReference type="Gene3D" id="3.40.309.10">
    <property type="entry name" value="Aldehyde Dehydrogenase, Chain A, domain 2"/>
    <property type="match status" value="1"/>
</dbReference>
<dbReference type="HAMAP" id="MF_00412">
    <property type="entry name" value="ProA"/>
    <property type="match status" value="1"/>
</dbReference>
<dbReference type="InterPro" id="IPR016161">
    <property type="entry name" value="Ald_DH/histidinol_DH"/>
</dbReference>
<dbReference type="InterPro" id="IPR016163">
    <property type="entry name" value="Ald_DH_C"/>
</dbReference>
<dbReference type="InterPro" id="IPR016162">
    <property type="entry name" value="Ald_DH_N"/>
</dbReference>
<dbReference type="InterPro" id="IPR015590">
    <property type="entry name" value="Aldehyde_DH_dom"/>
</dbReference>
<dbReference type="InterPro" id="IPR020593">
    <property type="entry name" value="G-glutamylP_reductase_CS"/>
</dbReference>
<dbReference type="InterPro" id="IPR012134">
    <property type="entry name" value="Glu-5-SA_DH"/>
</dbReference>
<dbReference type="InterPro" id="IPR000965">
    <property type="entry name" value="GPR_dom"/>
</dbReference>
<dbReference type="NCBIfam" id="NF001221">
    <property type="entry name" value="PRK00197.1"/>
    <property type="match status" value="1"/>
</dbReference>
<dbReference type="NCBIfam" id="TIGR00407">
    <property type="entry name" value="proA"/>
    <property type="match status" value="1"/>
</dbReference>
<dbReference type="PANTHER" id="PTHR11063:SF8">
    <property type="entry name" value="DELTA-1-PYRROLINE-5-CARBOXYLATE SYNTHASE"/>
    <property type="match status" value="1"/>
</dbReference>
<dbReference type="PANTHER" id="PTHR11063">
    <property type="entry name" value="GLUTAMATE SEMIALDEHYDE DEHYDROGENASE"/>
    <property type="match status" value="1"/>
</dbReference>
<dbReference type="Pfam" id="PF00171">
    <property type="entry name" value="Aldedh"/>
    <property type="match status" value="2"/>
</dbReference>
<dbReference type="PIRSF" id="PIRSF000151">
    <property type="entry name" value="GPR"/>
    <property type="match status" value="1"/>
</dbReference>
<dbReference type="SUPFAM" id="SSF53720">
    <property type="entry name" value="ALDH-like"/>
    <property type="match status" value="1"/>
</dbReference>
<dbReference type="PROSITE" id="PS01223">
    <property type="entry name" value="PROA"/>
    <property type="match status" value="1"/>
</dbReference>
<reference key="1">
    <citation type="journal article" date="1994" name="J. Bacteriol.">
        <title>Multiple copies of the proB gene enhance degS-dependent extracellular protease production in Bacillus subtilis.</title>
        <authorList>
            <person name="Ogura M."/>
            <person name="Kawata-Mukai M."/>
            <person name="Itaya M."/>
            <person name="Takio K."/>
            <person name="Tanaka T."/>
        </authorList>
    </citation>
    <scope>NUCLEOTIDE SEQUENCE [GENOMIC DNA]</scope>
    <source>
        <strain>168</strain>
    </source>
</reference>
<reference key="2">
    <citation type="submission" date="1997-11" db="EMBL/GenBank/DDBJ databases">
        <title>Sequence of the Bacillus subtilis genome between xlyA and ykoR.</title>
        <authorList>
            <person name="Devine K.M."/>
        </authorList>
    </citation>
    <scope>NUCLEOTIDE SEQUENCE [GENOMIC DNA]</scope>
    <source>
        <strain>168</strain>
    </source>
</reference>
<reference key="3">
    <citation type="journal article" date="1997" name="Nature">
        <title>The complete genome sequence of the Gram-positive bacterium Bacillus subtilis.</title>
        <authorList>
            <person name="Kunst F."/>
            <person name="Ogasawara N."/>
            <person name="Moszer I."/>
            <person name="Albertini A.M."/>
            <person name="Alloni G."/>
            <person name="Azevedo V."/>
            <person name="Bertero M.G."/>
            <person name="Bessieres P."/>
            <person name="Bolotin A."/>
            <person name="Borchert S."/>
            <person name="Borriss R."/>
            <person name="Boursier L."/>
            <person name="Brans A."/>
            <person name="Braun M."/>
            <person name="Brignell S.C."/>
            <person name="Bron S."/>
            <person name="Brouillet S."/>
            <person name="Bruschi C.V."/>
            <person name="Caldwell B."/>
            <person name="Capuano V."/>
            <person name="Carter N.M."/>
            <person name="Choi S.-K."/>
            <person name="Codani J.-J."/>
            <person name="Connerton I.F."/>
            <person name="Cummings N.J."/>
            <person name="Daniel R.A."/>
            <person name="Denizot F."/>
            <person name="Devine K.M."/>
            <person name="Duesterhoeft A."/>
            <person name="Ehrlich S.D."/>
            <person name="Emmerson P.T."/>
            <person name="Entian K.-D."/>
            <person name="Errington J."/>
            <person name="Fabret C."/>
            <person name="Ferrari E."/>
            <person name="Foulger D."/>
            <person name="Fritz C."/>
            <person name="Fujita M."/>
            <person name="Fujita Y."/>
            <person name="Fuma S."/>
            <person name="Galizzi A."/>
            <person name="Galleron N."/>
            <person name="Ghim S.-Y."/>
            <person name="Glaser P."/>
            <person name="Goffeau A."/>
            <person name="Golightly E.J."/>
            <person name="Grandi G."/>
            <person name="Guiseppi G."/>
            <person name="Guy B.J."/>
            <person name="Haga K."/>
            <person name="Haiech J."/>
            <person name="Harwood C.R."/>
            <person name="Henaut A."/>
            <person name="Hilbert H."/>
            <person name="Holsappel S."/>
            <person name="Hosono S."/>
            <person name="Hullo M.-F."/>
            <person name="Itaya M."/>
            <person name="Jones L.-M."/>
            <person name="Joris B."/>
            <person name="Karamata D."/>
            <person name="Kasahara Y."/>
            <person name="Klaerr-Blanchard M."/>
            <person name="Klein C."/>
            <person name="Kobayashi Y."/>
            <person name="Koetter P."/>
            <person name="Koningstein G."/>
            <person name="Krogh S."/>
            <person name="Kumano M."/>
            <person name="Kurita K."/>
            <person name="Lapidus A."/>
            <person name="Lardinois S."/>
            <person name="Lauber J."/>
            <person name="Lazarevic V."/>
            <person name="Lee S.-M."/>
            <person name="Levine A."/>
            <person name="Liu H."/>
            <person name="Masuda S."/>
            <person name="Mauel C."/>
            <person name="Medigue C."/>
            <person name="Medina N."/>
            <person name="Mellado R.P."/>
            <person name="Mizuno M."/>
            <person name="Moestl D."/>
            <person name="Nakai S."/>
            <person name="Noback M."/>
            <person name="Noone D."/>
            <person name="O'Reilly M."/>
            <person name="Ogawa K."/>
            <person name="Ogiwara A."/>
            <person name="Oudega B."/>
            <person name="Park S.-H."/>
            <person name="Parro V."/>
            <person name="Pohl T.M."/>
            <person name="Portetelle D."/>
            <person name="Porwollik S."/>
            <person name="Prescott A.M."/>
            <person name="Presecan E."/>
            <person name="Pujic P."/>
            <person name="Purnelle B."/>
            <person name="Rapoport G."/>
            <person name="Rey M."/>
            <person name="Reynolds S."/>
            <person name="Rieger M."/>
            <person name="Rivolta C."/>
            <person name="Rocha E."/>
            <person name="Roche B."/>
            <person name="Rose M."/>
            <person name="Sadaie Y."/>
            <person name="Sato T."/>
            <person name="Scanlan E."/>
            <person name="Schleich S."/>
            <person name="Schroeter R."/>
            <person name="Scoffone F."/>
            <person name="Sekiguchi J."/>
            <person name="Sekowska A."/>
            <person name="Seror S.J."/>
            <person name="Serror P."/>
            <person name="Shin B.-S."/>
            <person name="Soldo B."/>
            <person name="Sorokin A."/>
            <person name="Tacconi E."/>
            <person name="Takagi T."/>
            <person name="Takahashi H."/>
            <person name="Takemaru K."/>
            <person name="Takeuchi M."/>
            <person name="Tamakoshi A."/>
            <person name="Tanaka T."/>
            <person name="Terpstra P."/>
            <person name="Tognoni A."/>
            <person name="Tosato V."/>
            <person name="Uchiyama S."/>
            <person name="Vandenbol M."/>
            <person name="Vannier F."/>
            <person name="Vassarotti A."/>
            <person name="Viari A."/>
            <person name="Wambutt R."/>
            <person name="Wedler E."/>
            <person name="Wedler H."/>
            <person name="Weitzenegger T."/>
            <person name="Winters P."/>
            <person name="Wipat A."/>
            <person name="Yamamoto H."/>
            <person name="Yamane K."/>
            <person name="Yasumoto K."/>
            <person name="Yata K."/>
            <person name="Yoshida K."/>
            <person name="Yoshikawa H.-F."/>
            <person name="Zumstein E."/>
            <person name="Yoshikawa H."/>
            <person name="Danchin A."/>
        </authorList>
    </citation>
    <scope>NUCLEOTIDE SEQUENCE [LARGE SCALE GENOMIC DNA]</scope>
    <source>
        <strain>168</strain>
    </source>
</reference>
<reference key="4">
    <citation type="journal article" date="2009" name="Microbiology">
        <title>From a consortium sequence to a unified sequence: the Bacillus subtilis 168 reference genome a decade later.</title>
        <authorList>
            <person name="Barbe V."/>
            <person name="Cruveiller S."/>
            <person name="Kunst F."/>
            <person name="Lenoble P."/>
            <person name="Meurice G."/>
            <person name="Sekowska A."/>
            <person name="Vallenet D."/>
            <person name="Wang T."/>
            <person name="Moszer I."/>
            <person name="Medigue C."/>
            <person name="Danchin A."/>
        </authorList>
    </citation>
    <scope>SEQUENCE REVISION TO 359</scope>
</reference>
<evidence type="ECO:0000255" key="1">
    <source>
        <dbReference type="HAMAP-Rule" id="MF_00412"/>
    </source>
</evidence>
<evidence type="ECO:0000305" key="2"/>
<accession>P39821</accession>
<accession>O35032</accession>
<feature type="chain" id="PRO_0000189696" description="Gamma-glutamyl phosphate reductase">
    <location>
        <begin position="1"/>
        <end position="415"/>
    </location>
</feature>
<feature type="sequence conflict" description="In Ref. 1; BAA05045." evidence="2" ref="1">
    <original>E</original>
    <variation>Q</variation>
    <location>
        <position position="108"/>
    </location>
</feature>
<feature type="sequence conflict" description="In Ref. 1; BAA05045." evidence="2" ref="1">
    <original>A</original>
    <variation>T</variation>
    <location>
        <position position="174"/>
    </location>
</feature>
<feature type="sequence conflict" description="In Ref. 1; BAA05045." evidence="2" ref="1">
    <original>H</original>
    <variation>N</variation>
    <location>
        <position position="271"/>
    </location>
</feature>
<feature type="sequence conflict" description="In Ref. 2; CAA05592." evidence="2" ref="2">
    <original>A</original>
    <variation>R</variation>
    <location>
        <position position="359"/>
    </location>
</feature>
<protein>
    <recommendedName>
        <fullName evidence="1">Gamma-glutamyl phosphate reductase</fullName>
        <shortName evidence="1">GPR</shortName>
        <ecNumber evidence="1">1.2.1.41</ecNumber>
    </recommendedName>
    <alternativeName>
        <fullName evidence="1">Glutamate-5-semialdehyde dehydrogenase</fullName>
    </alternativeName>
    <alternativeName>
        <fullName evidence="1">Glutamyl-gamma-semialdehyde dehydrogenase</fullName>
        <shortName evidence="1">GSA dehydrogenase</shortName>
    </alternativeName>
</protein>